<sequence length="888" mass="98298">MQDKYNHLDVERSAQTHWNAADAYRVTEDASRKKYYACSMLPYPSGKLHMGHVRNYTINDMLSRYLRMKGYNVLMPMGWDAFGLPAENAALKNGVPPAQWTYDNIAYMKKQMQAMGLAVDWSREIATCDPSYYKWNQWLFLKMLEKGIAYRKTQVVNWDPVDQTVLANEQVIDGKGWRTGATVEKREIPGYYLKITDYAEELLGSVQHKLPGWPERVKLMQENWIGKSEGVRFAFLHDIKDASGALIGDGQMYVFTTRADTIMGVTFCAVAPEHPLAVHAAASNPALAAFVEECKSGGTTEAELATQEKKGQPTGLFVTHPLTGDKVEVWVGNYVLMSYGDGAVMGVPAHDERDFEFAKKYGLPIKQVTDVKGQAYSLDAWADWYGDKQHGIAINSGKYDGLAFKAAVDAIAADLAALGLGEKKTTWRLRDWGVSRQRYWGTPIPIIHCDEHGAVPVPEKDLPVVLPMDCIPDGSGNPLHKHEGFHAGVVCPVCGKPARRETDTMDTFVDSSWYFMRYCDPKNSEAMVAGGADYWMPMDQYIGGIEHAILHLLYARFWTKVMRDLGLVKVDEPFTKLLTQGMVLNHIYSRRTDKGGKEYFWPHDVEHVLDDTGKIAGARLKNAVGDLPVGTAIDYEGVGTMSKSKNNGVDPQDIIEKYGADTARLYTMFTAPPEATLEWNDAGVEGSYRFLRRVWNFGVKLNAMNSGANGADAACAKGLFDKETKALRLEVHTLLKQVDYDYQRMQYNTVVSGGMKLLNALEDFKGEISAASLAALREGFSVLLRCLYPAAPHLTHALWSELGYAAEAGDLLDTPWPEVDASALQQDEIELMLQINGKLRGSVTVPAGADKAVIEAAALASEAFVKQAAGAPAKKVIVVPGRLVNIVV</sequence>
<feature type="chain" id="PRO_1000009390" description="Leucine--tRNA ligase">
    <location>
        <begin position="1"/>
        <end position="888"/>
    </location>
</feature>
<feature type="short sequence motif" description="'HIGH' region">
    <location>
        <begin position="42"/>
        <end position="52"/>
    </location>
</feature>
<feature type="short sequence motif" description="'KMSKS' region">
    <location>
        <begin position="640"/>
        <end position="644"/>
    </location>
</feature>
<feature type="binding site" evidence="1">
    <location>
        <position position="643"/>
    </location>
    <ligand>
        <name>ATP</name>
        <dbReference type="ChEBI" id="CHEBI:30616"/>
    </ligand>
</feature>
<proteinExistence type="inferred from homology"/>
<keyword id="KW-0030">Aminoacyl-tRNA synthetase</keyword>
<keyword id="KW-0067">ATP-binding</keyword>
<keyword id="KW-0963">Cytoplasm</keyword>
<keyword id="KW-0436">Ligase</keyword>
<keyword id="KW-0547">Nucleotide-binding</keyword>
<keyword id="KW-0648">Protein biosynthesis</keyword>
<keyword id="KW-1185">Reference proteome</keyword>
<gene>
    <name evidence="1" type="primary">leuS</name>
    <name type="ordered locus">Pnap_3786</name>
</gene>
<protein>
    <recommendedName>
        <fullName evidence="1">Leucine--tRNA ligase</fullName>
        <ecNumber evidence="1">6.1.1.4</ecNumber>
    </recommendedName>
    <alternativeName>
        <fullName evidence="1">Leucyl-tRNA synthetase</fullName>
        <shortName evidence="1">LeuRS</shortName>
    </alternativeName>
</protein>
<accession>A1VTV4</accession>
<organism>
    <name type="scientific">Polaromonas naphthalenivorans (strain CJ2)</name>
    <dbReference type="NCBI Taxonomy" id="365044"/>
    <lineage>
        <taxon>Bacteria</taxon>
        <taxon>Pseudomonadati</taxon>
        <taxon>Pseudomonadota</taxon>
        <taxon>Betaproteobacteria</taxon>
        <taxon>Burkholderiales</taxon>
        <taxon>Comamonadaceae</taxon>
        <taxon>Polaromonas</taxon>
    </lineage>
</organism>
<evidence type="ECO:0000255" key="1">
    <source>
        <dbReference type="HAMAP-Rule" id="MF_00049"/>
    </source>
</evidence>
<reference key="1">
    <citation type="journal article" date="2009" name="Environ. Microbiol.">
        <title>The genome of Polaromonas naphthalenivorans strain CJ2, isolated from coal tar-contaminated sediment, reveals physiological and metabolic versatility and evolution through extensive horizontal gene transfer.</title>
        <authorList>
            <person name="Yagi J.M."/>
            <person name="Sims D."/>
            <person name="Brettin T."/>
            <person name="Bruce D."/>
            <person name="Madsen E.L."/>
        </authorList>
    </citation>
    <scope>NUCLEOTIDE SEQUENCE [LARGE SCALE GENOMIC DNA]</scope>
    <source>
        <strain>CJ2</strain>
    </source>
</reference>
<comment type="catalytic activity">
    <reaction evidence="1">
        <text>tRNA(Leu) + L-leucine + ATP = L-leucyl-tRNA(Leu) + AMP + diphosphate</text>
        <dbReference type="Rhea" id="RHEA:11688"/>
        <dbReference type="Rhea" id="RHEA-COMP:9613"/>
        <dbReference type="Rhea" id="RHEA-COMP:9622"/>
        <dbReference type="ChEBI" id="CHEBI:30616"/>
        <dbReference type="ChEBI" id="CHEBI:33019"/>
        <dbReference type="ChEBI" id="CHEBI:57427"/>
        <dbReference type="ChEBI" id="CHEBI:78442"/>
        <dbReference type="ChEBI" id="CHEBI:78494"/>
        <dbReference type="ChEBI" id="CHEBI:456215"/>
        <dbReference type="EC" id="6.1.1.4"/>
    </reaction>
</comment>
<comment type="subcellular location">
    <subcellularLocation>
        <location evidence="1">Cytoplasm</location>
    </subcellularLocation>
</comment>
<comment type="similarity">
    <text evidence="1">Belongs to the class-I aminoacyl-tRNA synthetase family.</text>
</comment>
<name>SYL_POLNA</name>
<dbReference type="EC" id="6.1.1.4" evidence="1"/>
<dbReference type="EMBL" id="CP000529">
    <property type="protein sequence ID" value="ABM39082.1"/>
    <property type="molecule type" value="Genomic_DNA"/>
</dbReference>
<dbReference type="RefSeq" id="WP_011803148.1">
    <property type="nucleotide sequence ID" value="NC_008781.1"/>
</dbReference>
<dbReference type="SMR" id="A1VTV4"/>
<dbReference type="STRING" id="365044.Pnap_3786"/>
<dbReference type="KEGG" id="pna:Pnap_3786"/>
<dbReference type="eggNOG" id="COG0495">
    <property type="taxonomic scope" value="Bacteria"/>
</dbReference>
<dbReference type="HOGENOM" id="CLU_004427_0_0_4"/>
<dbReference type="OrthoDB" id="9810365at2"/>
<dbReference type="Proteomes" id="UP000000644">
    <property type="component" value="Chromosome"/>
</dbReference>
<dbReference type="GO" id="GO:0005829">
    <property type="term" value="C:cytosol"/>
    <property type="evidence" value="ECO:0007669"/>
    <property type="project" value="TreeGrafter"/>
</dbReference>
<dbReference type="GO" id="GO:0002161">
    <property type="term" value="F:aminoacyl-tRNA deacylase activity"/>
    <property type="evidence" value="ECO:0007669"/>
    <property type="project" value="InterPro"/>
</dbReference>
<dbReference type="GO" id="GO:0005524">
    <property type="term" value="F:ATP binding"/>
    <property type="evidence" value="ECO:0007669"/>
    <property type="project" value="UniProtKB-UniRule"/>
</dbReference>
<dbReference type="GO" id="GO:0004823">
    <property type="term" value="F:leucine-tRNA ligase activity"/>
    <property type="evidence" value="ECO:0007669"/>
    <property type="project" value="UniProtKB-UniRule"/>
</dbReference>
<dbReference type="GO" id="GO:0006429">
    <property type="term" value="P:leucyl-tRNA aminoacylation"/>
    <property type="evidence" value="ECO:0007669"/>
    <property type="project" value="UniProtKB-UniRule"/>
</dbReference>
<dbReference type="CDD" id="cd07958">
    <property type="entry name" value="Anticodon_Ia_Leu_BEm"/>
    <property type="match status" value="1"/>
</dbReference>
<dbReference type="CDD" id="cd00812">
    <property type="entry name" value="LeuRS_core"/>
    <property type="match status" value="1"/>
</dbReference>
<dbReference type="FunFam" id="1.10.730.10:FF:000002">
    <property type="entry name" value="Leucine--tRNA ligase"/>
    <property type="match status" value="1"/>
</dbReference>
<dbReference type="FunFam" id="3.40.50.620:FF:000003">
    <property type="entry name" value="Leucine--tRNA ligase"/>
    <property type="match status" value="1"/>
</dbReference>
<dbReference type="FunFam" id="3.40.50.620:FF:000056">
    <property type="entry name" value="Leucine--tRNA ligase"/>
    <property type="match status" value="1"/>
</dbReference>
<dbReference type="FunFam" id="3.90.740.10:FF:000012">
    <property type="entry name" value="Leucine--tRNA ligase"/>
    <property type="match status" value="1"/>
</dbReference>
<dbReference type="Gene3D" id="2.20.28.290">
    <property type="match status" value="1"/>
</dbReference>
<dbReference type="Gene3D" id="3.10.20.590">
    <property type="match status" value="1"/>
</dbReference>
<dbReference type="Gene3D" id="3.40.50.620">
    <property type="entry name" value="HUPs"/>
    <property type="match status" value="2"/>
</dbReference>
<dbReference type="Gene3D" id="1.10.730.10">
    <property type="entry name" value="Isoleucyl-tRNA Synthetase, Domain 1"/>
    <property type="match status" value="2"/>
</dbReference>
<dbReference type="Gene3D" id="3.90.740.10">
    <property type="entry name" value="Valyl/Leucyl/Isoleucyl-tRNA synthetase, editing domain"/>
    <property type="match status" value="1"/>
</dbReference>
<dbReference type="HAMAP" id="MF_00049_B">
    <property type="entry name" value="Leu_tRNA_synth_B"/>
    <property type="match status" value="1"/>
</dbReference>
<dbReference type="InterPro" id="IPR001412">
    <property type="entry name" value="aa-tRNA-synth_I_CS"/>
</dbReference>
<dbReference type="InterPro" id="IPR002300">
    <property type="entry name" value="aa-tRNA-synth_Ia"/>
</dbReference>
<dbReference type="InterPro" id="IPR002302">
    <property type="entry name" value="Leu-tRNA-ligase"/>
</dbReference>
<dbReference type="InterPro" id="IPR025709">
    <property type="entry name" value="Leu_tRNA-synth_edit"/>
</dbReference>
<dbReference type="InterPro" id="IPR013155">
    <property type="entry name" value="M/V/L/I-tRNA-synth_anticd-bd"/>
</dbReference>
<dbReference type="InterPro" id="IPR015413">
    <property type="entry name" value="Methionyl/Leucyl_tRNA_Synth"/>
</dbReference>
<dbReference type="InterPro" id="IPR014729">
    <property type="entry name" value="Rossmann-like_a/b/a_fold"/>
</dbReference>
<dbReference type="InterPro" id="IPR009080">
    <property type="entry name" value="tRNAsynth_Ia_anticodon-bd"/>
</dbReference>
<dbReference type="InterPro" id="IPR009008">
    <property type="entry name" value="Val/Leu/Ile-tRNA-synth_edit"/>
</dbReference>
<dbReference type="NCBIfam" id="TIGR00396">
    <property type="entry name" value="leuS_bact"/>
    <property type="match status" value="1"/>
</dbReference>
<dbReference type="PANTHER" id="PTHR43740:SF2">
    <property type="entry name" value="LEUCINE--TRNA LIGASE, MITOCHONDRIAL"/>
    <property type="match status" value="1"/>
</dbReference>
<dbReference type="PANTHER" id="PTHR43740">
    <property type="entry name" value="LEUCYL-TRNA SYNTHETASE"/>
    <property type="match status" value="1"/>
</dbReference>
<dbReference type="Pfam" id="PF08264">
    <property type="entry name" value="Anticodon_1"/>
    <property type="match status" value="1"/>
</dbReference>
<dbReference type="Pfam" id="PF00133">
    <property type="entry name" value="tRNA-synt_1"/>
    <property type="match status" value="2"/>
</dbReference>
<dbReference type="Pfam" id="PF13603">
    <property type="entry name" value="tRNA-synt_1_2"/>
    <property type="match status" value="1"/>
</dbReference>
<dbReference type="Pfam" id="PF09334">
    <property type="entry name" value="tRNA-synt_1g"/>
    <property type="match status" value="1"/>
</dbReference>
<dbReference type="PRINTS" id="PR00985">
    <property type="entry name" value="TRNASYNTHLEU"/>
</dbReference>
<dbReference type="SUPFAM" id="SSF47323">
    <property type="entry name" value="Anticodon-binding domain of a subclass of class I aminoacyl-tRNA synthetases"/>
    <property type="match status" value="1"/>
</dbReference>
<dbReference type="SUPFAM" id="SSF52374">
    <property type="entry name" value="Nucleotidylyl transferase"/>
    <property type="match status" value="1"/>
</dbReference>
<dbReference type="SUPFAM" id="SSF50677">
    <property type="entry name" value="ValRS/IleRS/LeuRS editing domain"/>
    <property type="match status" value="1"/>
</dbReference>
<dbReference type="PROSITE" id="PS00178">
    <property type="entry name" value="AA_TRNA_LIGASE_I"/>
    <property type="match status" value="1"/>
</dbReference>